<proteinExistence type="inferred from homology"/>
<feature type="signal peptide" evidence="2">
    <location>
        <begin position="1"/>
        <end position="22"/>
    </location>
</feature>
<feature type="chain" id="PRO_0000430328" description="Proapolipoprotein C-II">
    <location>
        <begin position="23"/>
        <end position="100"/>
    </location>
</feature>
<feature type="chain" id="PRO_0000430841" description="Apolipoprotein C-II" evidence="1">
    <location>
        <begin position="29"/>
        <end position="100"/>
    </location>
</feature>
<feature type="region of interest" description="Lipid binding" evidence="1">
    <location>
        <begin position="66"/>
        <end position="74"/>
    </location>
</feature>
<feature type="region of interest" description="Lipoprotein lipase cofactor" evidence="1">
    <location>
        <begin position="78"/>
        <end position="100"/>
    </location>
</feature>
<organism>
    <name type="scientific">Otolemur garnettii</name>
    <name type="common">Small-eared galago</name>
    <name type="synonym">Garnett's greater bushbaby</name>
    <dbReference type="NCBI Taxonomy" id="30611"/>
    <lineage>
        <taxon>Eukaryota</taxon>
        <taxon>Metazoa</taxon>
        <taxon>Chordata</taxon>
        <taxon>Craniata</taxon>
        <taxon>Vertebrata</taxon>
        <taxon>Euteleostomi</taxon>
        <taxon>Mammalia</taxon>
        <taxon>Eutheria</taxon>
        <taxon>Euarchontoglires</taxon>
        <taxon>Primates</taxon>
        <taxon>Strepsirrhini</taxon>
        <taxon>Lorisiformes</taxon>
        <taxon>Galagidae</taxon>
        <taxon>Otolemur</taxon>
    </lineage>
</organism>
<name>APOC2_OTOGA</name>
<keyword id="KW-0162">Chylomicron</keyword>
<keyword id="KW-0325">Glycoprotein</keyword>
<keyword id="KW-0345">HDL</keyword>
<keyword id="KW-0427">LDL</keyword>
<keyword id="KW-0442">Lipid degradation</keyword>
<keyword id="KW-0443">Lipid metabolism</keyword>
<keyword id="KW-0445">Lipid transport</keyword>
<keyword id="KW-1185">Reference proteome</keyword>
<keyword id="KW-0964">Secreted</keyword>
<keyword id="KW-0730">Sialic acid</keyword>
<keyword id="KW-0732">Signal</keyword>
<keyword id="KW-0813">Transport</keyword>
<keyword id="KW-0850">VLDL</keyword>
<reference key="1">
    <citation type="submission" date="2011-03" db="EMBL/GenBank/DDBJ databases">
        <title>Version 3 of the genome sequence of Otolemur garnettii (Bushbaby).</title>
        <authorList>
            <consortium name="The Broad Institute Genome Sequencing Platform"/>
            <person name="Di Palma F."/>
            <person name="Johnson J."/>
            <person name="Lander E.S."/>
            <person name="Lindblad-Toh K."/>
            <person name="Jaffe D.B."/>
            <person name="Gnerre S."/>
            <person name="MacCallum I."/>
            <person name="Przybylski D."/>
            <person name="Ribeiro F.J."/>
            <person name="Burton J.N."/>
            <person name="Walker B.J."/>
            <person name="Sharpe T."/>
            <person name="Hall G."/>
        </authorList>
    </citation>
    <scope>NUCLEOTIDE SEQUENCE [LARGE SCALE GENOMIC DNA]</scope>
</reference>
<reference key="2">
    <citation type="unpublished observations" date="2014-07">
        <authorList>
            <person name="Puppione D.L."/>
        </authorList>
    </citation>
    <scope>IDENTIFICATION</scope>
</reference>
<accession>P0DMN9</accession>
<gene>
    <name type="primary">APOC2</name>
</gene>
<protein>
    <recommendedName>
        <fullName>Apolipoprotein C-II</fullName>
        <shortName>Apo-CII</shortName>
        <shortName>ApoC-II</shortName>
    </recommendedName>
    <alternativeName>
        <fullName>Apolipoprotein C2</fullName>
    </alternativeName>
    <component>
        <recommendedName>
            <fullName>Proapolipoprotein C-II</fullName>
            <shortName>ProapoC-II</shortName>
        </recommendedName>
    </component>
</protein>
<comment type="function">
    <text evidence="1">Component of chylomicrons, very low-density lipoproteins (VLDL), low-density lipoproteins (LDL), and high-density lipoproteins (HDL) in plasma. Plays an important role in lipoprotein metabolism as an activator of lipoprotein lipase. Both proapolipoprotein C-II and apolipoprotein C-II can activate lipoprotein lipase.</text>
</comment>
<comment type="subcellular location">
    <subcellularLocation>
        <location evidence="1">Secreted</location>
    </subcellularLocation>
</comment>
<comment type="PTM">
    <text evidence="1">Proapolipoprotein C-II is synthesized as a sialic acid containing glycoprotein which is subsequently desialylated prior to its proteolytic processing.</text>
</comment>
<comment type="PTM">
    <text evidence="1">Proapolipoprotein C-II, the major form found in plasma undergoes proteolytic cleavage of its N-terminal hexapeptide to generate apolipoprotein C-II, which occurs as the minor form in plasma.</text>
</comment>
<comment type="similarity">
    <text evidence="3">Belongs to the apolipoprotein C2 family.</text>
</comment>
<dbReference type="EMBL" id="AAQR03153639">
    <property type="status" value="NOT_ANNOTATED_CDS"/>
    <property type="molecule type" value="Genomic_DNA"/>
</dbReference>
<dbReference type="RefSeq" id="XP_003799547.1">
    <property type="nucleotide sequence ID" value="XM_003799499.3"/>
</dbReference>
<dbReference type="SMR" id="P0DMN9"/>
<dbReference type="FunCoup" id="P0DMN9">
    <property type="interactions" value="15"/>
</dbReference>
<dbReference type="GeneID" id="100956226"/>
<dbReference type="KEGG" id="oga:100956226"/>
<dbReference type="CTD" id="344"/>
<dbReference type="InParanoid" id="P0DMN9"/>
<dbReference type="OrthoDB" id="9881800at2759"/>
<dbReference type="Proteomes" id="UP000005225">
    <property type="component" value="Unassembled WGS sequence"/>
</dbReference>
<dbReference type="GO" id="GO:0042627">
    <property type="term" value="C:chylomicron"/>
    <property type="evidence" value="ECO:0007669"/>
    <property type="project" value="UniProtKB-KW"/>
</dbReference>
<dbReference type="GO" id="GO:0034364">
    <property type="term" value="C:high-density lipoprotein particle"/>
    <property type="evidence" value="ECO:0007669"/>
    <property type="project" value="UniProtKB-KW"/>
</dbReference>
<dbReference type="GO" id="GO:0034362">
    <property type="term" value="C:low-density lipoprotein particle"/>
    <property type="evidence" value="ECO:0007669"/>
    <property type="project" value="UniProtKB-KW"/>
</dbReference>
<dbReference type="GO" id="GO:0034361">
    <property type="term" value="C:very-low-density lipoprotein particle"/>
    <property type="evidence" value="ECO:0007669"/>
    <property type="project" value="UniProtKB-KW"/>
</dbReference>
<dbReference type="GO" id="GO:0016004">
    <property type="term" value="F:phospholipase activator activity"/>
    <property type="evidence" value="ECO:0007669"/>
    <property type="project" value="TreeGrafter"/>
</dbReference>
<dbReference type="GO" id="GO:0043274">
    <property type="term" value="F:phospholipase binding"/>
    <property type="evidence" value="ECO:0007669"/>
    <property type="project" value="TreeGrafter"/>
</dbReference>
<dbReference type="GO" id="GO:0016042">
    <property type="term" value="P:lipid catabolic process"/>
    <property type="evidence" value="ECO:0007669"/>
    <property type="project" value="UniProtKB-KW"/>
</dbReference>
<dbReference type="GO" id="GO:0006869">
    <property type="term" value="P:lipid transport"/>
    <property type="evidence" value="ECO:0007669"/>
    <property type="project" value="UniProtKB-KW"/>
</dbReference>
<dbReference type="GO" id="GO:0060697">
    <property type="term" value="P:positive regulation of phospholipid catabolic process"/>
    <property type="evidence" value="ECO:0007669"/>
    <property type="project" value="TreeGrafter"/>
</dbReference>
<dbReference type="FunFam" id="1.10.1440.10:FF:000001">
    <property type="entry name" value="Apolipoprotein C-II"/>
    <property type="match status" value="1"/>
</dbReference>
<dbReference type="Gene3D" id="1.10.1440.10">
    <property type="entry name" value="Apolipoprotein C-II"/>
    <property type="match status" value="1"/>
</dbReference>
<dbReference type="InterPro" id="IPR008019">
    <property type="entry name" value="Apo-CII"/>
</dbReference>
<dbReference type="InterPro" id="IPR023121">
    <property type="entry name" value="ApoC-II_dom_sf"/>
</dbReference>
<dbReference type="PANTHER" id="PTHR16566">
    <property type="entry name" value="APOLIPOPROTEIN C-II"/>
    <property type="match status" value="1"/>
</dbReference>
<dbReference type="PANTHER" id="PTHR16566:SF0">
    <property type="entry name" value="APOLIPOPROTEIN C-II"/>
    <property type="match status" value="1"/>
</dbReference>
<dbReference type="Pfam" id="PF05355">
    <property type="entry name" value="Apo-CII"/>
    <property type="match status" value="1"/>
</dbReference>
<sequence>MGTRFLLALFLVLLVLGFEVQGAQLPQQDEPSSPTLLTQMQESLSSYWDSAKEAARGLYEKTYLPTVDEKLRDMYSKSTAAVSTYAGIFTDQLLTLLKGD</sequence>
<evidence type="ECO:0000250" key="1">
    <source>
        <dbReference type="UniProtKB" id="P02655"/>
    </source>
</evidence>
<evidence type="ECO:0000255" key="2"/>
<evidence type="ECO:0000305" key="3"/>